<protein>
    <recommendedName>
        <fullName>Cytochrome b</fullName>
    </recommendedName>
    <alternativeName>
        <fullName>Complex III subunit 3</fullName>
    </alternativeName>
    <alternativeName>
        <fullName>Complex III subunit III</fullName>
    </alternativeName>
    <alternativeName>
        <fullName>Cytochrome b-c1 complex subunit 3</fullName>
    </alternativeName>
    <alternativeName>
        <fullName>Ubiquinol-cytochrome-c reductase complex cytochrome b subunit</fullName>
    </alternativeName>
</protein>
<reference key="1">
    <citation type="journal article" date="2000" name="Mol. Phylogenet. Evol.">
        <title>Molecular systematics of pikas (genus Ochotona) inferred from mitochondrial DNA sequences.</title>
        <authorList>
            <person name="Yu N."/>
            <person name="Zheng C."/>
            <person name="Zhang Y.P."/>
            <person name="Li W.H."/>
        </authorList>
    </citation>
    <scope>NUCLEOTIDE SEQUENCE [GENOMIC DNA]</scope>
</reference>
<feature type="chain" id="PRO_0000061303" description="Cytochrome b">
    <location>
        <begin position="1"/>
        <end position="379"/>
    </location>
</feature>
<feature type="transmembrane region" description="Helical" evidence="2">
    <location>
        <begin position="33"/>
        <end position="53"/>
    </location>
</feature>
<feature type="transmembrane region" description="Helical" evidence="2">
    <location>
        <begin position="77"/>
        <end position="98"/>
    </location>
</feature>
<feature type="transmembrane region" description="Helical" evidence="2">
    <location>
        <begin position="113"/>
        <end position="133"/>
    </location>
</feature>
<feature type="transmembrane region" description="Helical" evidence="2">
    <location>
        <begin position="178"/>
        <end position="198"/>
    </location>
</feature>
<feature type="transmembrane region" description="Helical" evidence="2">
    <location>
        <begin position="226"/>
        <end position="246"/>
    </location>
</feature>
<feature type="transmembrane region" description="Helical" evidence="2">
    <location>
        <begin position="288"/>
        <end position="308"/>
    </location>
</feature>
<feature type="transmembrane region" description="Helical" evidence="2">
    <location>
        <begin position="320"/>
        <end position="340"/>
    </location>
</feature>
<feature type="transmembrane region" description="Helical" evidence="2">
    <location>
        <begin position="347"/>
        <end position="367"/>
    </location>
</feature>
<feature type="binding site" description="axial binding residue" evidence="2">
    <location>
        <position position="83"/>
    </location>
    <ligand>
        <name>heme b</name>
        <dbReference type="ChEBI" id="CHEBI:60344"/>
        <label>b562</label>
    </ligand>
    <ligandPart>
        <name>Fe</name>
        <dbReference type="ChEBI" id="CHEBI:18248"/>
    </ligandPart>
</feature>
<feature type="binding site" description="axial binding residue" evidence="2">
    <location>
        <position position="97"/>
    </location>
    <ligand>
        <name>heme b</name>
        <dbReference type="ChEBI" id="CHEBI:60344"/>
        <label>b566</label>
    </ligand>
    <ligandPart>
        <name>Fe</name>
        <dbReference type="ChEBI" id="CHEBI:18248"/>
    </ligandPart>
</feature>
<feature type="binding site" description="axial binding residue" evidence="2">
    <location>
        <position position="182"/>
    </location>
    <ligand>
        <name>heme b</name>
        <dbReference type="ChEBI" id="CHEBI:60344"/>
        <label>b562</label>
    </ligand>
    <ligandPart>
        <name>Fe</name>
        <dbReference type="ChEBI" id="CHEBI:18248"/>
    </ligandPart>
</feature>
<feature type="binding site" description="axial binding residue" evidence="2">
    <location>
        <position position="196"/>
    </location>
    <ligand>
        <name>heme b</name>
        <dbReference type="ChEBI" id="CHEBI:60344"/>
        <label>b566</label>
    </ligand>
    <ligandPart>
        <name>Fe</name>
        <dbReference type="ChEBI" id="CHEBI:18248"/>
    </ligandPart>
</feature>
<feature type="binding site" evidence="2">
    <location>
        <position position="201"/>
    </location>
    <ligand>
        <name>a ubiquinone</name>
        <dbReference type="ChEBI" id="CHEBI:16389"/>
    </ligand>
</feature>
<evidence type="ECO:0000250" key="1"/>
<evidence type="ECO:0000250" key="2">
    <source>
        <dbReference type="UniProtKB" id="P00157"/>
    </source>
</evidence>
<evidence type="ECO:0000255" key="3">
    <source>
        <dbReference type="PROSITE-ProRule" id="PRU00967"/>
    </source>
</evidence>
<evidence type="ECO:0000255" key="4">
    <source>
        <dbReference type="PROSITE-ProRule" id="PRU00968"/>
    </source>
</evidence>
<keyword id="KW-0249">Electron transport</keyword>
<keyword id="KW-0349">Heme</keyword>
<keyword id="KW-0408">Iron</keyword>
<keyword id="KW-0472">Membrane</keyword>
<keyword id="KW-0479">Metal-binding</keyword>
<keyword id="KW-0496">Mitochondrion</keyword>
<keyword id="KW-0999">Mitochondrion inner membrane</keyword>
<keyword id="KW-0679">Respiratory chain</keyword>
<keyword id="KW-0812">Transmembrane</keyword>
<keyword id="KW-1133">Transmembrane helix</keyword>
<keyword id="KW-0813">Transport</keyword>
<keyword id="KW-0830">Ubiquinone</keyword>
<geneLocation type="mitochondrion"/>
<dbReference type="EMBL" id="AF272993">
    <property type="protein sequence ID" value="AAG00188.1"/>
    <property type="molecule type" value="Genomic_DNA"/>
</dbReference>
<dbReference type="SMR" id="Q9GBZ0"/>
<dbReference type="GO" id="GO:0005743">
    <property type="term" value="C:mitochondrial inner membrane"/>
    <property type="evidence" value="ECO:0007669"/>
    <property type="project" value="UniProtKB-SubCell"/>
</dbReference>
<dbReference type="GO" id="GO:0045275">
    <property type="term" value="C:respiratory chain complex III"/>
    <property type="evidence" value="ECO:0007669"/>
    <property type="project" value="InterPro"/>
</dbReference>
<dbReference type="GO" id="GO:0046872">
    <property type="term" value="F:metal ion binding"/>
    <property type="evidence" value="ECO:0007669"/>
    <property type="project" value="UniProtKB-KW"/>
</dbReference>
<dbReference type="GO" id="GO:0008121">
    <property type="term" value="F:ubiquinol-cytochrome-c reductase activity"/>
    <property type="evidence" value="ECO:0007669"/>
    <property type="project" value="InterPro"/>
</dbReference>
<dbReference type="GO" id="GO:0006122">
    <property type="term" value="P:mitochondrial electron transport, ubiquinol to cytochrome c"/>
    <property type="evidence" value="ECO:0007669"/>
    <property type="project" value="TreeGrafter"/>
</dbReference>
<dbReference type="CDD" id="cd00290">
    <property type="entry name" value="cytochrome_b_C"/>
    <property type="match status" value="1"/>
</dbReference>
<dbReference type="CDD" id="cd00284">
    <property type="entry name" value="Cytochrome_b_N"/>
    <property type="match status" value="1"/>
</dbReference>
<dbReference type="FunFam" id="1.20.810.10:FF:000002">
    <property type="entry name" value="Cytochrome b"/>
    <property type="match status" value="1"/>
</dbReference>
<dbReference type="Gene3D" id="1.20.810.10">
    <property type="entry name" value="Cytochrome Bc1 Complex, Chain C"/>
    <property type="match status" value="1"/>
</dbReference>
<dbReference type="InterPro" id="IPR005798">
    <property type="entry name" value="Cyt_b/b6_C"/>
</dbReference>
<dbReference type="InterPro" id="IPR036150">
    <property type="entry name" value="Cyt_b/b6_C_sf"/>
</dbReference>
<dbReference type="InterPro" id="IPR005797">
    <property type="entry name" value="Cyt_b/b6_N"/>
</dbReference>
<dbReference type="InterPro" id="IPR027387">
    <property type="entry name" value="Cytb/b6-like_sf"/>
</dbReference>
<dbReference type="InterPro" id="IPR030689">
    <property type="entry name" value="Cytochrome_b"/>
</dbReference>
<dbReference type="InterPro" id="IPR048260">
    <property type="entry name" value="Cytochrome_b_C_euk/bac"/>
</dbReference>
<dbReference type="InterPro" id="IPR048259">
    <property type="entry name" value="Cytochrome_b_N_euk/bac"/>
</dbReference>
<dbReference type="InterPro" id="IPR016174">
    <property type="entry name" value="Di-haem_cyt_TM"/>
</dbReference>
<dbReference type="PANTHER" id="PTHR19271">
    <property type="entry name" value="CYTOCHROME B"/>
    <property type="match status" value="1"/>
</dbReference>
<dbReference type="PANTHER" id="PTHR19271:SF16">
    <property type="entry name" value="CYTOCHROME B"/>
    <property type="match status" value="1"/>
</dbReference>
<dbReference type="Pfam" id="PF00032">
    <property type="entry name" value="Cytochrom_B_C"/>
    <property type="match status" value="1"/>
</dbReference>
<dbReference type="Pfam" id="PF00033">
    <property type="entry name" value="Cytochrome_B"/>
    <property type="match status" value="1"/>
</dbReference>
<dbReference type="PIRSF" id="PIRSF038885">
    <property type="entry name" value="COB"/>
    <property type="match status" value="1"/>
</dbReference>
<dbReference type="SUPFAM" id="SSF81648">
    <property type="entry name" value="a domain/subunit of cytochrome bc1 complex (Ubiquinol-cytochrome c reductase)"/>
    <property type="match status" value="1"/>
</dbReference>
<dbReference type="SUPFAM" id="SSF81342">
    <property type="entry name" value="Transmembrane di-heme cytochromes"/>
    <property type="match status" value="1"/>
</dbReference>
<dbReference type="PROSITE" id="PS51003">
    <property type="entry name" value="CYTB_CTER"/>
    <property type="match status" value="1"/>
</dbReference>
<dbReference type="PROSITE" id="PS51002">
    <property type="entry name" value="CYTB_NTER"/>
    <property type="match status" value="1"/>
</dbReference>
<organism>
    <name type="scientific">Ochotona koslowi</name>
    <name type="common">Koslov's pika</name>
    <dbReference type="NCBI Taxonomy" id="130835"/>
    <lineage>
        <taxon>Eukaryota</taxon>
        <taxon>Metazoa</taxon>
        <taxon>Chordata</taxon>
        <taxon>Craniata</taxon>
        <taxon>Vertebrata</taxon>
        <taxon>Euteleostomi</taxon>
        <taxon>Mammalia</taxon>
        <taxon>Eutheria</taxon>
        <taxon>Euarchontoglires</taxon>
        <taxon>Glires</taxon>
        <taxon>Lagomorpha</taxon>
        <taxon>Ochotonidae</taxon>
        <taxon>Ochotona</taxon>
    </lineage>
</organism>
<sequence length="379" mass="42800">MTNIRKTHPLMKIINHSLIDLPAPSNISAWWNFGSLLGLCLGIQIITGLFLAMHYTSDTLTAFSSVTHICRDVNYGWIIRYMHANGASMFFICLFLHVGRGIYYGSYTYSETWNIGILLLFTVMATAFMGYVLPWGQMSFWGATVITNLLSAIPYIGTDLVQWIWGGFSVDKATLTRFFAFHFILPFIITALVMVHLLFLHETGSNNPTGIISDADKIPFHPYYTIKDAFGFLLLISLLLTLVLFSPDLLGDPDNYTPANPLNTPPHIKPEWYFLFAYAILRSIPNKLGGVLALILSIAILAAMPLLHTSKQRSMMFRPISQTLFWILVADLLTLTWIGGQPVEHPFIIIGQLASFFYFFLILILMPTSSLIENKLLKW</sequence>
<proteinExistence type="inferred from homology"/>
<accession>Q9GBZ0</accession>
<name>CYB_OCHKO</name>
<comment type="function">
    <text evidence="2">Component of the ubiquinol-cytochrome c reductase complex (complex III or cytochrome b-c1 complex) that is part of the mitochondrial respiratory chain. The b-c1 complex mediates electron transfer from ubiquinol to cytochrome c. Contributes to the generation of a proton gradient across the mitochondrial membrane that is then used for ATP synthesis.</text>
</comment>
<comment type="cofactor">
    <cofactor evidence="2">
        <name>heme b</name>
        <dbReference type="ChEBI" id="CHEBI:60344"/>
    </cofactor>
    <text evidence="2">Binds 2 heme b groups non-covalently.</text>
</comment>
<comment type="subunit">
    <text evidence="2">The cytochrome bc1 complex contains 11 subunits: 3 respiratory subunits (MT-CYB, CYC1 and UQCRFS1), 2 core proteins (UQCRC1 and UQCRC2) and 6 low-molecular weight proteins (UQCRH/QCR6, UQCRB/QCR7, UQCRQ/QCR8, UQCR10/QCR9, UQCR11/QCR10 and a cleavage product of UQCRFS1). This cytochrome bc1 complex then forms a dimer.</text>
</comment>
<comment type="subcellular location">
    <subcellularLocation>
        <location evidence="2">Mitochondrion inner membrane</location>
        <topology evidence="2">Multi-pass membrane protein</topology>
    </subcellularLocation>
</comment>
<comment type="miscellaneous">
    <text evidence="1">Heme 1 (or BL or b562) is low-potential and absorbs at about 562 nm, and heme 2 (or BH or b566) is high-potential and absorbs at about 566 nm.</text>
</comment>
<comment type="similarity">
    <text evidence="3 4">Belongs to the cytochrome b family.</text>
</comment>
<comment type="caution">
    <text evidence="2">The full-length protein contains only eight transmembrane helices, not nine as predicted by bioinformatics tools.</text>
</comment>
<gene>
    <name type="primary">MT-CYB</name>
    <name type="synonym">COB</name>
    <name type="synonym">CYTB</name>
    <name type="synonym">MTCYB</name>
</gene>